<name>CTXD1_HUMAN</name>
<feature type="chain" id="PRO_0000442852" description="Cortexin domain-containing 1 protein">
    <location>
        <begin position="1"/>
        <end position="59"/>
    </location>
</feature>
<feature type="transmembrane region" description="Helical" evidence="1">
    <location>
        <begin position="17"/>
        <end position="37"/>
    </location>
</feature>
<accession>A0A1B0GTU2</accession>
<dbReference type="EMBL" id="AC087761">
    <property type="status" value="NOT_ANNOTATED_CDS"/>
    <property type="molecule type" value="Genomic_DNA"/>
</dbReference>
<dbReference type="CCDS" id="CCDS86481.1"/>
<dbReference type="RefSeq" id="NP_001339817.1">
    <property type="nucleotide sequence ID" value="NM_001352888.2"/>
</dbReference>
<dbReference type="SMR" id="A0A1B0GTU2"/>
<dbReference type="FunCoup" id="A0A1B0GTU2">
    <property type="interactions" value="1"/>
</dbReference>
<dbReference type="STRING" id="9606.ENSP00000489837"/>
<dbReference type="BioMuta" id="CTXND1"/>
<dbReference type="Ensembl" id="ENST00000560778.3">
    <property type="protein sequence ID" value="ENSP00000489837.1"/>
    <property type="gene ID" value="ENSG00000259417.3"/>
</dbReference>
<dbReference type="GeneID" id="100996492"/>
<dbReference type="MANE-Select" id="ENST00000560778.3">
    <property type="protein sequence ID" value="ENSP00000489837.1"/>
    <property type="RefSeq nucleotide sequence ID" value="NM_001352888.2"/>
    <property type="RefSeq protein sequence ID" value="NP_001339817.1"/>
</dbReference>
<dbReference type="AGR" id="HGNC:50507"/>
<dbReference type="GeneCards" id="CTXND1"/>
<dbReference type="HGNC" id="HGNC:50507">
    <property type="gene designation" value="CTXND1"/>
</dbReference>
<dbReference type="HPA" id="ENSG00000259417">
    <property type="expression patterns" value="Tissue enhanced (brain, liver)"/>
</dbReference>
<dbReference type="neXtProt" id="NX_A0A1B0GTU2"/>
<dbReference type="OpenTargets" id="ENSG00000259417"/>
<dbReference type="VEuPathDB" id="HostDB:ENSG00000259417"/>
<dbReference type="GeneTree" id="ENSGT00960000186669"/>
<dbReference type="InParanoid" id="A0A1B0GTU2"/>
<dbReference type="OMA" id="WIVSIME"/>
<dbReference type="PAN-GO" id="A0A1B0GTU2">
    <property type="GO annotations" value="0 GO annotations based on evolutionary models"/>
</dbReference>
<dbReference type="Pharos" id="A0A1B0GTU2">
    <property type="development level" value="Tdark"/>
</dbReference>
<dbReference type="PRO" id="PR:A0A1B0GTU2"/>
<dbReference type="Proteomes" id="UP000005640">
    <property type="component" value="Chromosome 15"/>
</dbReference>
<dbReference type="RNAct" id="A0A1B0GTU2">
    <property type="molecule type" value="protein"/>
</dbReference>
<dbReference type="Bgee" id="ENSG00000259417">
    <property type="expression patterns" value="Expressed in CA1 field of hippocampus and 139 other cell types or tissues"/>
</dbReference>
<dbReference type="GO" id="GO:0016020">
    <property type="term" value="C:membrane"/>
    <property type="evidence" value="ECO:0007669"/>
    <property type="project" value="UniProtKB-SubCell"/>
</dbReference>
<dbReference type="InterPro" id="IPR020066">
    <property type="entry name" value="Cortexin"/>
</dbReference>
<dbReference type="PANTHER" id="PTHR16736:SF5">
    <property type="entry name" value="CORTEXIN DOMAIN-CONTAINING 1 PROTEIN"/>
    <property type="match status" value="1"/>
</dbReference>
<dbReference type="PANTHER" id="PTHR16736">
    <property type="entry name" value="CORTEXIN-1-RELATED"/>
    <property type="match status" value="1"/>
</dbReference>
<dbReference type="Pfam" id="PF11057">
    <property type="entry name" value="Cortexin"/>
    <property type="match status" value="1"/>
</dbReference>
<keyword id="KW-0472">Membrane</keyword>
<keyword id="KW-1185">Reference proteome</keyword>
<keyword id="KW-0812">Transmembrane</keyword>
<keyword id="KW-1133">Transmembrane helix</keyword>
<evidence type="ECO:0000255" key="1"/>
<evidence type="ECO:0000312" key="2">
    <source>
        <dbReference type="HGNC" id="HGNC:50507"/>
    </source>
</evidence>
<reference key="1">
    <citation type="journal article" date="2006" name="Nature">
        <title>Analysis of the DNA sequence and duplication history of human chromosome 15.</title>
        <authorList>
            <person name="Zody M.C."/>
            <person name="Garber M."/>
            <person name="Sharpe T."/>
            <person name="Young S.K."/>
            <person name="Rowen L."/>
            <person name="O'Neill K."/>
            <person name="Whittaker C.A."/>
            <person name="Kamal M."/>
            <person name="Chang J.L."/>
            <person name="Cuomo C.A."/>
            <person name="Dewar K."/>
            <person name="FitzGerald M.G."/>
            <person name="Kodira C.D."/>
            <person name="Madan A."/>
            <person name="Qin S."/>
            <person name="Yang X."/>
            <person name="Abbasi N."/>
            <person name="Abouelleil A."/>
            <person name="Arachchi H.M."/>
            <person name="Baradarani L."/>
            <person name="Birditt B."/>
            <person name="Bloom S."/>
            <person name="Bloom T."/>
            <person name="Borowsky M.L."/>
            <person name="Burke J."/>
            <person name="Butler J."/>
            <person name="Cook A."/>
            <person name="DeArellano K."/>
            <person name="DeCaprio D."/>
            <person name="Dorris L. III"/>
            <person name="Dors M."/>
            <person name="Eichler E.E."/>
            <person name="Engels R."/>
            <person name="Fahey J."/>
            <person name="Fleetwood P."/>
            <person name="Friedman C."/>
            <person name="Gearin G."/>
            <person name="Hall J.L."/>
            <person name="Hensley G."/>
            <person name="Johnson E."/>
            <person name="Jones C."/>
            <person name="Kamat A."/>
            <person name="Kaur A."/>
            <person name="Locke D.P."/>
            <person name="Madan A."/>
            <person name="Munson G."/>
            <person name="Jaffe D.B."/>
            <person name="Lui A."/>
            <person name="Macdonald P."/>
            <person name="Mauceli E."/>
            <person name="Naylor J.W."/>
            <person name="Nesbitt R."/>
            <person name="Nicol R."/>
            <person name="O'Leary S.B."/>
            <person name="Ratcliffe A."/>
            <person name="Rounsley S."/>
            <person name="She X."/>
            <person name="Sneddon K.M.B."/>
            <person name="Stewart S."/>
            <person name="Sougnez C."/>
            <person name="Stone S.M."/>
            <person name="Topham K."/>
            <person name="Vincent D."/>
            <person name="Wang S."/>
            <person name="Zimmer A.R."/>
            <person name="Birren B.W."/>
            <person name="Hood L."/>
            <person name="Lander E.S."/>
            <person name="Nusbaum C."/>
        </authorList>
    </citation>
    <scope>NUCLEOTIDE SEQUENCE [LARGE SCALE GENOMIC DNA]</scope>
</reference>
<comment type="subcellular location">
    <subcellularLocation>
        <location evidence="1">Membrane</location>
        <topology evidence="1">Single-pass membrane protein</topology>
    </subcellularLocation>
</comment>
<sequence>MEEPTPEPVYVDVDKGLTLACFVFLCLFLVVMIIRCAKVIMDPYSAIPTSTWEEQHLDD</sequence>
<organism>
    <name type="scientific">Homo sapiens</name>
    <name type="common">Human</name>
    <dbReference type="NCBI Taxonomy" id="9606"/>
    <lineage>
        <taxon>Eukaryota</taxon>
        <taxon>Metazoa</taxon>
        <taxon>Chordata</taxon>
        <taxon>Craniata</taxon>
        <taxon>Vertebrata</taxon>
        <taxon>Euteleostomi</taxon>
        <taxon>Mammalia</taxon>
        <taxon>Eutheria</taxon>
        <taxon>Euarchontoglires</taxon>
        <taxon>Primates</taxon>
        <taxon>Haplorrhini</taxon>
        <taxon>Catarrhini</taxon>
        <taxon>Hominidae</taxon>
        <taxon>Homo</taxon>
    </lineage>
</organism>
<proteinExistence type="inferred from homology"/>
<gene>
    <name evidence="2" type="primary">CTXND1</name>
</gene>
<protein>
    <recommendedName>
        <fullName evidence="2">Cortexin domain-containing 1 protein</fullName>
    </recommendedName>
</protein>